<protein>
    <recommendedName>
        <fullName>Thrombin-like enzyme batroxobin</fullName>
        <shortName>BX</shortName>
        <shortName>SVTLE</shortName>
        <ecNumber>3.4.21.74</ecNumber>
    </recommendedName>
    <alternativeName>
        <fullName>Bothrops atrox serine proteinase</fullName>
    </alternativeName>
    <alternativeName>
        <fullName>Defibrase</fullName>
    </alternativeName>
    <alternativeName>
        <fullName>Fibrinogen-clotting enzyme</fullName>
    </alternativeName>
    <alternativeName>
        <fullName>Reptilase</fullName>
    </alternativeName>
    <alternativeName>
        <fullName>Snake venom serine protease</fullName>
        <shortName>SVSP</shortName>
    </alternativeName>
    <alternativeName>
        <fullName>Venombin A</fullName>
    </alternativeName>
</protein>
<name>VSPF_BOTAT</name>
<reference key="1">
    <citation type="journal article" date="1987" name="J. Biol. Chem.">
        <title>Molecular cloning and sequence analysis of cDNA for batroxobin, a thrombin-like snake venom enzyme.</title>
        <authorList>
            <person name="Itoh N."/>
            <person name="Tanaka N."/>
            <person name="Mihashi S."/>
            <person name="Yamashina I."/>
        </authorList>
    </citation>
    <scope>NUCLEOTIDE SEQUENCE [MRNA]</scope>
    <source>
        <tissue>Venom gland</tissue>
    </source>
</reference>
<reference key="2">
    <citation type="journal article" date="1988" name="J. Biol. Chem.">
        <title>Organization of the gene for batroxobin, a thrombin-like snake venom enzyme. Homology with the trypsin/kallikrein gene family.</title>
        <authorList>
            <person name="Itoh N."/>
            <person name="Tanaka N."/>
            <person name="Funakoshi I."/>
            <person name="Kawasaki T."/>
            <person name="Mihashi S."/>
            <person name="Yamashina I."/>
        </authorList>
    </citation>
    <scope>NUCLEOTIDE SEQUENCE [GENOMIC DNA]</scope>
</reference>
<reference key="3">
    <citation type="journal article" date="1988" name="Nucleic Acids Res.">
        <title>The complete nucleotide sequence of the gene for batroxobin, a thrombin-like snake venom enzyme.</title>
        <authorList>
            <person name="Itoh N."/>
            <person name="Tanaka N."/>
            <person name="Funakoshi I."/>
            <person name="Kawasaki T."/>
            <person name="Mihashi S."/>
            <person name="Yamashima I."/>
        </authorList>
    </citation>
    <scope>NUCLEOTIDE SEQUENCE [GENOMIC DNA]</scope>
</reference>
<reference key="4">
    <citation type="journal article" date="1976" name="Methods Enzymol.">
        <title>The coagulant enzyme from Bothrops atrox venom (batroxobin).</title>
        <authorList>
            <person name="Stocker K."/>
            <person name="Barlow G.H."/>
        </authorList>
    </citation>
    <scope>FUNCTION</scope>
</reference>
<reference key="5">
    <citation type="journal article" date="1995" name="Eur. J. Biochem.">
        <title>Carbohydrate structure analysis of batroxobin, a thrombin-like serine protease from Bothrops moojeni venom.</title>
        <authorList>
            <person name="Lochnit G."/>
            <person name="Geyer R."/>
        </authorList>
    </citation>
    <scope>GLYCOSYLATION AT ASN-170 AND ASN-249</scope>
    <scope>STRUCTURE OF CARBOHYDRATE ON ASN-170 AND ASN-249</scope>
</reference>
<evidence type="ECO:0000250" key="1"/>
<evidence type="ECO:0000255" key="2">
    <source>
        <dbReference type="PROSITE-ProRule" id="PRU00274"/>
    </source>
</evidence>
<evidence type="ECO:0000269" key="3">
    <source>
    </source>
</evidence>
<evidence type="ECO:0000269" key="4">
    <source>
    </source>
</evidence>
<evidence type="ECO:0000305" key="5"/>
<accession>P04971</accession>
<sequence>MVLIRVIANLLILQVSYAQKSSELVIGGDECDINEHPFLAFMYYSPRYFCGMTLINQEWVLTAAHCNRRFMRIHLGKHAGSVANYDEVVRYPKEKFICPNKKKNVITDKDIMLIRLDRPVKNSEHIAPLSLPSNPPSVGSVCRIMGWGAITTSEDTYPDVPHCANINLFNNTVCREAYNGLPAKTLCAGVLQGGIDTCGGDSGGPLICNGQFQGILSWGSDPCAEPRKPAFYTKVFDYLPWIQSIIAGNKTATCP</sequence>
<dbReference type="EC" id="3.4.21.74"/>
<dbReference type="EMBL" id="J02684">
    <property type="protein sequence ID" value="AAA48552.1"/>
    <property type="molecule type" value="mRNA"/>
</dbReference>
<dbReference type="EMBL" id="X12747">
    <property type="protein sequence ID" value="CAA31240.1"/>
    <property type="molecule type" value="Genomic_DNA"/>
</dbReference>
<dbReference type="EMBL" id="M20894">
    <property type="protein sequence ID" value="AAA48553.1"/>
    <property type="status" value="ALT_SEQ"/>
    <property type="molecule type" value="Genomic_DNA"/>
</dbReference>
<dbReference type="EMBL" id="M20890">
    <property type="protein sequence ID" value="AAA48553.1"/>
    <property type="status" value="JOINED"/>
    <property type="molecule type" value="Genomic_DNA"/>
</dbReference>
<dbReference type="EMBL" id="M20891">
    <property type="protein sequence ID" value="AAA48553.1"/>
    <property type="status" value="JOINED"/>
    <property type="molecule type" value="Genomic_DNA"/>
</dbReference>
<dbReference type="EMBL" id="M20892">
    <property type="protein sequence ID" value="AAA48553.1"/>
    <property type="status" value="JOINED"/>
    <property type="molecule type" value="Genomic_DNA"/>
</dbReference>
<dbReference type="EMBL" id="M20893">
    <property type="protein sequence ID" value="AAA48553.1"/>
    <property type="status" value="JOINED"/>
    <property type="molecule type" value="Genomic_DNA"/>
</dbReference>
<dbReference type="PIR" id="A28169">
    <property type="entry name" value="A28169"/>
</dbReference>
<dbReference type="SMR" id="P04971"/>
<dbReference type="MEROPS" id="S01.176"/>
<dbReference type="GlyConnect" id="68">
    <property type="glycosylation" value="1 N-Linked glycan"/>
</dbReference>
<dbReference type="iPTMnet" id="P04971"/>
<dbReference type="KEGG" id="ag:AAA48552"/>
<dbReference type="GO" id="GO:0005576">
    <property type="term" value="C:extracellular region"/>
    <property type="evidence" value="ECO:0007669"/>
    <property type="project" value="UniProtKB-SubCell"/>
</dbReference>
<dbReference type="GO" id="GO:0030141">
    <property type="term" value="C:secretory granule"/>
    <property type="evidence" value="ECO:0007669"/>
    <property type="project" value="TreeGrafter"/>
</dbReference>
<dbReference type="GO" id="GO:0004252">
    <property type="term" value="F:serine-type endopeptidase activity"/>
    <property type="evidence" value="ECO:0007669"/>
    <property type="project" value="InterPro"/>
</dbReference>
<dbReference type="GO" id="GO:0090729">
    <property type="term" value="F:toxin activity"/>
    <property type="evidence" value="ECO:0007669"/>
    <property type="project" value="UniProtKB-KW"/>
</dbReference>
<dbReference type="GO" id="GO:0006508">
    <property type="term" value="P:proteolysis"/>
    <property type="evidence" value="ECO:0007669"/>
    <property type="project" value="UniProtKB-KW"/>
</dbReference>
<dbReference type="CDD" id="cd00190">
    <property type="entry name" value="Tryp_SPc"/>
    <property type="match status" value="1"/>
</dbReference>
<dbReference type="FunFam" id="2.40.10.10:FF:000158">
    <property type="entry name" value="Thrombin-like enzyme saxthrombin"/>
    <property type="match status" value="1"/>
</dbReference>
<dbReference type="FunFam" id="2.40.10.10:FF:000153">
    <property type="entry name" value="Venom plasminogen activator TSV-PA"/>
    <property type="match status" value="1"/>
</dbReference>
<dbReference type="Gene3D" id="2.40.10.10">
    <property type="entry name" value="Trypsin-like serine proteases"/>
    <property type="match status" value="2"/>
</dbReference>
<dbReference type="InterPro" id="IPR009003">
    <property type="entry name" value="Peptidase_S1_PA"/>
</dbReference>
<dbReference type="InterPro" id="IPR043504">
    <property type="entry name" value="Peptidase_S1_PA_chymotrypsin"/>
</dbReference>
<dbReference type="InterPro" id="IPR001314">
    <property type="entry name" value="Peptidase_S1A"/>
</dbReference>
<dbReference type="InterPro" id="IPR001254">
    <property type="entry name" value="Trypsin_dom"/>
</dbReference>
<dbReference type="InterPro" id="IPR018114">
    <property type="entry name" value="TRYPSIN_HIS"/>
</dbReference>
<dbReference type="InterPro" id="IPR033116">
    <property type="entry name" value="TRYPSIN_SER"/>
</dbReference>
<dbReference type="PANTHER" id="PTHR24271:SF47">
    <property type="entry name" value="KALLIKREIN-1"/>
    <property type="match status" value="1"/>
</dbReference>
<dbReference type="PANTHER" id="PTHR24271">
    <property type="entry name" value="KALLIKREIN-RELATED"/>
    <property type="match status" value="1"/>
</dbReference>
<dbReference type="Pfam" id="PF00089">
    <property type="entry name" value="Trypsin"/>
    <property type="match status" value="1"/>
</dbReference>
<dbReference type="PRINTS" id="PR00722">
    <property type="entry name" value="CHYMOTRYPSIN"/>
</dbReference>
<dbReference type="SMART" id="SM00020">
    <property type="entry name" value="Tryp_SPc"/>
    <property type="match status" value="1"/>
</dbReference>
<dbReference type="SUPFAM" id="SSF50494">
    <property type="entry name" value="Trypsin-like serine proteases"/>
    <property type="match status" value="1"/>
</dbReference>
<dbReference type="PROSITE" id="PS50240">
    <property type="entry name" value="TRYPSIN_DOM"/>
    <property type="match status" value="1"/>
</dbReference>
<dbReference type="PROSITE" id="PS00134">
    <property type="entry name" value="TRYPSIN_HIS"/>
    <property type="match status" value="1"/>
</dbReference>
<dbReference type="PROSITE" id="PS00135">
    <property type="entry name" value="TRYPSIN_SER"/>
    <property type="match status" value="1"/>
</dbReference>
<keyword id="KW-1204">Blood coagulation cascade activating toxin</keyword>
<keyword id="KW-1015">Disulfide bond</keyword>
<keyword id="KW-0325">Glycoprotein</keyword>
<keyword id="KW-1199">Hemostasis impairing toxin</keyword>
<keyword id="KW-0378">Hydrolase</keyword>
<keyword id="KW-0582">Pharmaceutical</keyword>
<keyword id="KW-0645">Protease</keyword>
<keyword id="KW-0964">Secreted</keyword>
<keyword id="KW-0720">Serine protease</keyword>
<keyword id="KW-0732">Signal</keyword>
<keyword id="KW-0800">Toxin</keyword>
<keyword id="KW-0865">Zymogen</keyword>
<organism>
    <name type="scientific">Bothrops atrox</name>
    <name type="common">Barba amarilla</name>
    <name type="synonym">Fer-de-lance</name>
    <dbReference type="NCBI Taxonomy" id="8725"/>
    <lineage>
        <taxon>Eukaryota</taxon>
        <taxon>Metazoa</taxon>
        <taxon>Chordata</taxon>
        <taxon>Craniata</taxon>
        <taxon>Vertebrata</taxon>
        <taxon>Euteleostomi</taxon>
        <taxon>Lepidosauria</taxon>
        <taxon>Squamata</taxon>
        <taxon>Bifurcata</taxon>
        <taxon>Unidentata</taxon>
        <taxon>Episquamata</taxon>
        <taxon>Toxicofera</taxon>
        <taxon>Serpentes</taxon>
        <taxon>Colubroidea</taxon>
        <taxon>Viperidae</taxon>
        <taxon>Crotalinae</taxon>
        <taxon>Bothrops</taxon>
    </lineage>
</organism>
<proteinExistence type="evidence at protein level"/>
<feature type="signal peptide" evidence="1">
    <location>
        <begin position="1"/>
        <end position="18"/>
    </location>
</feature>
<feature type="propeptide" id="PRO_0000028379">
    <location>
        <begin position="19"/>
        <end position="24"/>
    </location>
</feature>
<feature type="chain" id="PRO_0000028380" description="Thrombin-like enzyme batroxobin">
    <location>
        <begin position="25"/>
        <end position="255"/>
    </location>
</feature>
<feature type="domain" description="Peptidase S1" evidence="2">
    <location>
        <begin position="25"/>
        <end position="247"/>
    </location>
</feature>
<feature type="active site" description="Charge relay system" evidence="1">
    <location>
        <position position="65"/>
    </location>
</feature>
<feature type="active site" description="Charge relay system" evidence="1">
    <location>
        <position position="110"/>
    </location>
</feature>
<feature type="active site" description="Charge relay system" evidence="1">
    <location>
        <position position="202"/>
    </location>
</feature>
<feature type="site" description="Required for specificity" evidence="1">
    <location>
        <position position="196"/>
    </location>
</feature>
<feature type="glycosylation site" description="N-linked (GlcNAc...) asparagine" evidence="4">
    <location>
        <position position="170"/>
    </location>
</feature>
<feature type="glycosylation site" description="N-linked (GlcNAc...) asparagine" evidence="4">
    <location>
        <position position="249"/>
    </location>
</feature>
<feature type="disulfide bond" evidence="2">
    <location>
        <begin position="31"/>
        <end position="163"/>
    </location>
</feature>
<feature type="disulfide bond" evidence="2">
    <location>
        <begin position="50"/>
        <end position="66"/>
    </location>
</feature>
<feature type="disulfide bond" evidence="2">
    <location>
        <begin position="98"/>
        <end position="254"/>
    </location>
</feature>
<feature type="disulfide bond" evidence="2">
    <location>
        <begin position="142"/>
        <end position="208"/>
    </location>
</feature>
<feature type="disulfide bond" evidence="2">
    <location>
        <begin position="174"/>
        <end position="187"/>
    </location>
</feature>
<feature type="disulfide bond" evidence="2">
    <location>
        <begin position="198"/>
        <end position="223"/>
    </location>
</feature>
<comment type="function">
    <text evidence="3">Thrombin-like snake venom serine protease. Cleaves Arg-Gly bonds in fibrinogen alpha chains (FGA).</text>
</comment>
<comment type="catalytic activity">
    <reaction>
        <text>Selective cleavage of Arg-|-Xaa bond in fibrinogen, to form fibrin, and release fibrinopeptide A. The specificity of further degradation of fibrinogen varies with species origin of the enzyme.</text>
        <dbReference type="EC" id="3.4.21.74"/>
    </reaction>
</comment>
<comment type="subunit">
    <text evidence="1">Monomer.</text>
</comment>
<comment type="subcellular location">
    <subcellularLocation>
        <location>Secreted</location>
    </subcellularLocation>
</comment>
<comment type="tissue specificity">
    <text>Expressed by the venom gland.</text>
</comment>
<comment type="biotechnology">
    <text>Is used for the investigation of the last phase of blood coagulation. Due to its heparin insensitivity it can detect fibrinogen polymerization disorders even in the presence of heparin.</text>
</comment>
<comment type="pharmaceutical">
    <text>Available under the name Defibrase (Pentapharm) for the treatment of thrombotic diseases.</text>
</comment>
<comment type="miscellaneous">
    <text>Negative results: does not cleave beta-chains of fibrinogen (FGB).</text>
</comment>
<comment type="similarity">
    <text evidence="2">Belongs to the peptidase S1 family. Snake venom subfamily.</text>
</comment>
<comment type="sequence caution" evidence="5">
    <conflict type="erroneous gene model prediction">
        <sequence resource="EMBL-CDS" id="AAA48553"/>
    </conflict>
</comment>